<keyword id="KW-0413">Isomerase</keyword>
<keyword id="KW-0460">Magnesium</keyword>
<keyword id="KW-0479">Metal-binding</keyword>
<keyword id="KW-0597">Phosphoprotein</keyword>
<sequence length="447" mass="46445">MTRLFGTDGVRGLANEVLTAPLALKLGAAAAHVLTAEKRVDGRRPVAIVGRDPRVSGEMLAAALSAGMASQGVDVIRVGVIPTPAVAFLTDDYGADMGVMISASHNPMPDNGIKFFSAGGHKLPDHVEDEIERVMDSLPAEGPTGHGVGRVIEEATDAQDRYLEHLKEAVPTSLEGIKIVVDAANGAASVVAPKAYEAAGATVIAIHNKPDSYNINMDCGSTHIDQVQAAVLKHGADLGLAHDGDADRCLAVDKDGNLIDGDQIMAMLAIAMKENGELRKNTLVGTVMSNLGLKIAMDEAGITLRTTKVGDRYVLEDLNAGGFSLGGEQSGHIVLPDHGTTGDGTLTGLSIMARMAETGKSLGELAQAMTVLPQVLINVPVSDKSTIVSHPSVVAAIAEAEAELGSTGRVLLRASGTEELFRVMVEAGDKEQARRIAGRLSAVVAEV</sequence>
<organism>
    <name type="scientific">Corynebacterium glutamicum (strain R)</name>
    <dbReference type="NCBI Taxonomy" id="340322"/>
    <lineage>
        <taxon>Bacteria</taxon>
        <taxon>Bacillati</taxon>
        <taxon>Actinomycetota</taxon>
        <taxon>Actinomycetes</taxon>
        <taxon>Mycobacteriales</taxon>
        <taxon>Corynebacteriaceae</taxon>
        <taxon>Corynebacterium</taxon>
    </lineage>
</organism>
<evidence type="ECO:0000255" key="1">
    <source>
        <dbReference type="HAMAP-Rule" id="MF_01554"/>
    </source>
</evidence>
<accession>A4QBS5</accession>
<feature type="chain" id="PRO_0000301305" description="Phosphoglucosamine mutase">
    <location>
        <begin position="1"/>
        <end position="447"/>
    </location>
</feature>
<feature type="active site" description="Phosphoserine intermediate" evidence="1">
    <location>
        <position position="104"/>
    </location>
</feature>
<feature type="binding site" description="via phosphate group" evidence="1">
    <location>
        <position position="104"/>
    </location>
    <ligand>
        <name>Mg(2+)</name>
        <dbReference type="ChEBI" id="CHEBI:18420"/>
    </ligand>
</feature>
<feature type="binding site" evidence="1">
    <location>
        <position position="243"/>
    </location>
    <ligand>
        <name>Mg(2+)</name>
        <dbReference type="ChEBI" id="CHEBI:18420"/>
    </ligand>
</feature>
<feature type="binding site" evidence="1">
    <location>
        <position position="245"/>
    </location>
    <ligand>
        <name>Mg(2+)</name>
        <dbReference type="ChEBI" id="CHEBI:18420"/>
    </ligand>
</feature>
<feature type="binding site" evidence="1">
    <location>
        <position position="247"/>
    </location>
    <ligand>
        <name>Mg(2+)</name>
        <dbReference type="ChEBI" id="CHEBI:18420"/>
    </ligand>
</feature>
<feature type="modified residue" description="Phosphoserine" evidence="1">
    <location>
        <position position="104"/>
    </location>
</feature>
<name>GLMM_CORGB</name>
<dbReference type="EC" id="5.4.2.10" evidence="1"/>
<dbReference type="EMBL" id="AP009044">
    <property type="protein sequence ID" value="BAF53672.1"/>
    <property type="molecule type" value="Genomic_DNA"/>
</dbReference>
<dbReference type="RefSeq" id="WP_003854539.1">
    <property type="nucleotide sequence ID" value="NC_009342.1"/>
</dbReference>
<dbReference type="SMR" id="A4QBS5"/>
<dbReference type="KEGG" id="cgt:cgR_0701"/>
<dbReference type="HOGENOM" id="CLU_016950_7_0_11"/>
<dbReference type="PhylomeDB" id="A4QBS5"/>
<dbReference type="Proteomes" id="UP000006698">
    <property type="component" value="Chromosome"/>
</dbReference>
<dbReference type="GO" id="GO:0005829">
    <property type="term" value="C:cytosol"/>
    <property type="evidence" value="ECO:0007669"/>
    <property type="project" value="TreeGrafter"/>
</dbReference>
<dbReference type="GO" id="GO:0000287">
    <property type="term" value="F:magnesium ion binding"/>
    <property type="evidence" value="ECO:0007669"/>
    <property type="project" value="UniProtKB-UniRule"/>
</dbReference>
<dbReference type="GO" id="GO:0008966">
    <property type="term" value="F:phosphoglucosamine mutase activity"/>
    <property type="evidence" value="ECO:0007669"/>
    <property type="project" value="UniProtKB-UniRule"/>
</dbReference>
<dbReference type="GO" id="GO:0004615">
    <property type="term" value="F:phosphomannomutase activity"/>
    <property type="evidence" value="ECO:0007669"/>
    <property type="project" value="TreeGrafter"/>
</dbReference>
<dbReference type="GO" id="GO:0005975">
    <property type="term" value="P:carbohydrate metabolic process"/>
    <property type="evidence" value="ECO:0007669"/>
    <property type="project" value="InterPro"/>
</dbReference>
<dbReference type="GO" id="GO:0009252">
    <property type="term" value="P:peptidoglycan biosynthetic process"/>
    <property type="evidence" value="ECO:0007669"/>
    <property type="project" value="TreeGrafter"/>
</dbReference>
<dbReference type="GO" id="GO:0006048">
    <property type="term" value="P:UDP-N-acetylglucosamine biosynthetic process"/>
    <property type="evidence" value="ECO:0007669"/>
    <property type="project" value="TreeGrafter"/>
</dbReference>
<dbReference type="CDD" id="cd05802">
    <property type="entry name" value="GlmM"/>
    <property type="match status" value="1"/>
</dbReference>
<dbReference type="FunFam" id="3.30.310.50:FF:000001">
    <property type="entry name" value="Phosphoglucosamine mutase"/>
    <property type="match status" value="1"/>
</dbReference>
<dbReference type="FunFam" id="3.40.120.10:FF:000001">
    <property type="entry name" value="Phosphoglucosamine mutase"/>
    <property type="match status" value="1"/>
</dbReference>
<dbReference type="FunFam" id="3.40.120.10:FF:000002">
    <property type="entry name" value="Phosphoglucosamine mutase"/>
    <property type="match status" value="1"/>
</dbReference>
<dbReference type="Gene3D" id="3.40.120.10">
    <property type="entry name" value="Alpha-D-Glucose-1,6-Bisphosphate, subunit A, domain 3"/>
    <property type="match status" value="3"/>
</dbReference>
<dbReference type="Gene3D" id="3.30.310.50">
    <property type="entry name" value="Alpha-D-phosphohexomutase, C-terminal domain"/>
    <property type="match status" value="1"/>
</dbReference>
<dbReference type="HAMAP" id="MF_01554_B">
    <property type="entry name" value="GlmM_B"/>
    <property type="match status" value="1"/>
</dbReference>
<dbReference type="InterPro" id="IPR005844">
    <property type="entry name" value="A-D-PHexomutase_a/b/a-I"/>
</dbReference>
<dbReference type="InterPro" id="IPR016055">
    <property type="entry name" value="A-D-PHexomutase_a/b/a-I/II/III"/>
</dbReference>
<dbReference type="InterPro" id="IPR005845">
    <property type="entry name" value="A-D-PHexomutase_a/b/a-II"/>
</dbReference>
<dbReference type="InterPro" id="IPR005846">
    <property type="entry name" value="A-D-PHexomutase_a/b/a-III"/>
</dbReference>
<dbReference type="InterPro" id="IPR005843">
    <property type="entry name" value="A-D-PHexomutase_C"/>
</dbReference>
<dbReference type="InterPro" id="IPR036900">
    <property type="entry name" value="A-D-PHexomutase_C_sf"/>
</dbReference>
<dbReference type="InterPro" id="IPR016066">
    <property type="entry name" value="A-D-PHexomutase_CS"/>
</dbReference>
<dbReference type="InterPro" id="IPR005841">
    <property type="entry name" value="Alpha-D-phosphohexomutase_SF"/>
</dbReference>
<dbReference type="InterPro" id="IPR006352">
    <property type="entry name" value="GlmM_bact"/>
</dbReference>
<dbReference type="InterPro" id="IPR050060">
    <property type="entry name" value="Phosphoglucosamine_mutase"/>
</dbReference>
<dbReference type="NCBIfam" id="TIGR01455">
    <property type="entry name" value="glmM"/>
    <property type="match status" value="1"/>
</dbReference>
<dbReference type="NCBIfam" id="NF008139">
    <property type="entry name" value="PRK10887.1"/>
    <property type="match status" value="1"/>
</dbReference>
<dbReference type="PANTHER" id="PTHR42946:SF1">
    <property type="entry name" value="PHOSPHOGLUCOMUTASE (ALPHA-D-GLUCOSE-1,6-BISPHOSPHATE-DEPENDENT)"/>
    <property type="match status" value="1"/>
</dbReference>
<dbReference type="PANTHER" id="PTHR42946">
    <property type="entry name" value="PHOSPHOHEXOSE MUTASE"/>
    <property type="match status" value="1"/>
</dbReference>
<dbReference type="Pfam" id="PF02878">
    <property type="entry name" value="PGM_PMM_I"/>
    <property type="match status" value="1"/>
</dbReference>
<dbReference type="Pfam" id="PF02879">
    <property type="entry name" value="PGM_PMM_II"/>
    <property type="match status" value="1"/>
</dbReference>
<dbReference type="Pfam" id="PF02880">
    <property type="entry name" value="PGM_PMM_III"/>
    <property type="match status" value="1"/>
</dbReference>
<dbReference type="Pfam" id="PF00408">
    <property type="entry name" value="PGM_PMM_IV"/>
    <property type="match status" value="1"/>
</dbReference>
<dbReference type="PRINTS" id="PR00509">
    <property type="entry name" value="PGMPMM"/>
</dbReference>
<dbReference type="SUPFAM" id="SSF55957">
    <property type="entry name" value="Phosphoglucomutase, C-terminal domain"/>
    <property type="match status" value="1"/>
</dbReference>
<dbReference type="SUPFAM" id="SSF53738">
    <property type="entry name" value="Phosphoglucomutase, first 3 domains"/>
    <property type="match status" value="3"/>
</dbReference>
<dbReference type="PROSITE" id="PS00710">
    <property type="entry name" value="PGM_PMM"/>
    <property type="match status" value="1"/>
</dbReference>
<reference key="1">
    <citation type="journal article" date="2007" name="Microbiology">
        <title>Comparative analysis of the Corynebacterium glutamicum group and complete genome sequence of strain R.</title>
        <authorList>
            <person name="Yukawa H."/>
            <person name="Omumasaba C.A."/>
            <person name="Nonaka H."/>
            <person name="Kos P."/>
            <person name="Okai N."/>
            <person name="Suzuki N."/>
            <person name="Suda M."/>
            <person name="Tsuge Y."/>
            <person name="Watanabe J."/>
            <person name="Ikeda Y."/>
            <person name="Vertes A.A."/>
            <person name="Inui M."/>
        </authorList>
    </citation>
    <scope>NUCLEOTIDE SEQUENCE [LARGE SCALE GENOMIC DNA]</scope>
    <source>
        <strain>R</strain>
    </source>
</reference>
<proteinExistence type="inferred from homology"/>
<comment type="function">
    <text evidence="1">Catalyzes the conversion of glucosamine-6-phosphate to glucosamine-1-phosphate.</text>
</comment>
<comment type="catalytic activity">
    <reaction evidence="1">
        <text>alpha-D-glucosamine 1-phosphate = D-glucosamine 6-phosphate</text>
        <dbReference type="Rhea" id="RHEA:23424"/>
        <dbReference type="ChEBI" id="CHEBI:58516"/>
        <dbReference type="ChEBI" id="CHEBI:58725"/>
        <dbReference type="EC" id="5.4.2.10"/>
    </reaction>
</comment>
<comment type="cofactor">
    <cofactor evidence="1">
        <name>Mg(2+)</name>
        <dbReference type="ChEBI" id="CHEBI:18420"/>
    </cofactor>
    <text evidence="1">Binds 1 Mg(2+) ion per subunit.</text>
</comment>
<comment type="PTM">
    <text evidence="1">Activated by phosphorylation.</text>
</comment>
<comment type="similarity">
    <text evidence="1">Belongs to the phosphohexose mutase family.</text>
</comment>
<gene>
    <name evidence="1" type="primary">glmM</name>
    <name type="ordered locus">cgR_0701</name>
</gene>
<protein>
    <recommendedName>
        <fullName evidence="1">Phosphoglucosamine mutase</fullName>
        <ecNumber evidence="1">5.4.2.10</ecNumber>
    </recommendedName>
</protein>